<evidence type="ECO:0000255" key="1">
    <source>
        <dbReference type="HAMAP-Rule" id="MF_01393"/>
    </source>
</evidence>
<comment type="function">
    <text evidence="1">Key component of the proton channel; it plays a direct role in the translocation of protons across the membrane.</text>
</comment>
<comment type="subunit">
    <text evidence="1">F-type ATPases have 2 components, CF(1) - the catalytic core - and CF(0) - the membrane proton channel. CF(1) has five subunits: alpha(3), beta(3), gamma(1), delta(1), epsilon(1). CF(0) has three main subunits: a(1), b(2) and c(9-12). The alpha and beta chains form an alternating ring which encloses part of the gamma chain. CF(1) is attached to CF(0) by a central stalk formed by the gamma and epsilon chains, while a peripheral stalk is formed by the delta and b chains.</text>
</comment>
<comment type="subcellular location">
    <subcellularLocation>
        <location evidence="1">Cell inner membrane</location>
        <topology evidence="1">Multi-pass membrane protein</topology>
    </subcellularLocation>
</comment>
<comment type="similarity">
    <text evidence="1">Belongs to the ATPase A chain family.</text>
</comment>
<organism>
    <name type="scientific">Sulfurimonas denitrificans (strain ATCC 33889 / DSM 1251)</name>
    <name type="common">Thiomicrospira denitrificans (strain ATCC 33889 / DSM 1251)</name>
    <dbReference type="NCBI Taxonomy" id="326298"/>
    <lineage>
        <taxon>Bacteria</taxon>
        <taxon>Pseudomonadati</taxon>
        <taxon>Campylobacterota</taxon>
        <taxon>Epsilonproteobacteria</taxon>
        <taxon>Campylobacterales</taxon>
        <taxon>Sulfurimonadaceae</taxon>
        <taxon>Sulfurimonas</taxon>
    </lineage>
</organism>
<proteinExistence type="inferred from homology"/>
<reference key="1">
    <citation type="journal article" date="2008" name="Appl. Environ. Microbiol.">
        <title>Genome of the epsilonproteobacterial chemolithoautotroph Sulfurimonas denitrificans.</title>
        <authorList>
            <person name="Sievert S.M."/>
            <person name="Scott K.M."/>
            <person name="Klotz M.G."/>
            <person name="Chain P.S.G."/>
            <person name="Hauser L.J."/>
            <person name="Hemp J."/>
            <person name="Huegler M."/>
            <person name="Land M."/>
            <person name="Lapidus A."/>
            <person name="Larimer F.W."/>
            <person name="Lucas S."/>
            <person name="Malfatti S.A."/>
            <person name="Meyer F."/>
            <person name="Paulsen I.T."/>
            <person name="Ren Q."/>
            <person name="Simon J."/>
            <person name="Bailey K."/>
            <person name="Diaz E."/>
            <person name="Fitzpatrick K.A."/>
            <person name="Glover B."/>
            <person name="Gwatney N."/>
            <person name="Korajkic A."/>
            <person name="Long A."/>
            <person name="Mobberley J.M."/>
            <person name="Pantry S.N."/>
            <person name="Pazder G."/>
            <person name="Peterson S."/>
            <person name="Quintanilla J.D."/>
            <person name="Sprinkle R."/>
            <person name="Stephens J."/>
            <person name="Thomas P."/>
            <person name="Vaughn R."/>
            <person name="Weber M.J."/>
            <person name="Wooten L.L."/>
        </authorList>
    </citation>
    <scope>NUCLEOTIDE SEQUENCE [LARGE SCALE GENOMIC DNA]</scope>
    <source>
        <strain>ATCC 33889 / DSM 1251</strain>
    </source>
</reference>
<dbReference type="EMBL" id="CP000153">
    <property type="protein sequence ID" value="ABB44617.1"/>
    <property type="molecule type" value="Genomic_DNA"/>
</dbReference>
<dbReference type="RefSeq" id="WP_011372969.1">
    <property type="nucleotide sequence ID" value="NC_007575.1"/>
</dbReference>
<dbReference type="SMR" id="Q30QW4"/>
<dbReference type="STRING" id="326298.Suden_1339"/>
<dbReference type="KEGG" id="tdn:Suden_1339"/>
<dbReference type="eggNOG" id="COG0356">
    <property type="taxonomic scope" value="Bacteria"/>
</dbReference>
<dbReference type="HOGENOM" id="CLU_041018_2_2_7"/>
<dbReference type="OrthoDB" id="9789241at2"/>
<dbReference type="Proteomes" id="UP000002714">
    <property type="component" value="Chromosome"/>
</dbReference>
<dbReference type="GO" id="GO:0005886">
    <property type="term" value="C:plasma membrane"/>
    <property type="evidence" value="ECO:0007669"/>
    <property type="project" value="UniProtKB-SubCell"/>
</dbReference>
<dbReference type="GO" id="GO:0045259">
    <property type="term" value="C:proton-transporting ATP synthase complex"/>
    <property type="evidence" value="ECO:0007669"/>
    <property type="project" value="UniProtKB-KW"/>
</dbReference>
<dbReference type="GO" id="GO:0046933">
    <property type="term" value="F:proton-transporting ATP synthase activity, rotational mechanism"/>
    <property type="evidence" value="ECO:0007669"/>
    <property type="project" value="UniProtKB-UniRule"/>
</dbReference>
<dbReference type="GO" id="GO:0042777">
    <property type="term" value="P:proton motive force-driven plasma membrane ATP synthesis"/>
    <property type="evidence" value="ECO:0007669"/>
    <property type="project" value="TreeGrafter"/>
</dbReference>
<dbReference type="CDD" id="cd00310">
    <property type="entry name" value="ATP-synt_Fo_a_6"/>
    <property type="match status" value="1"/>
</dbReference>
<dbReference type="FunFam" id="1.20.120.220:FF:000006">
    <property type="entry name" value="ATP synthase subunit a"/>
    <property type="match status" value="1"/>
</dbReference>
<dbReference type="Gene3D" id="1.20.120.220">
    <property type="entry name" value="ATP synthase, F0 complex, subunit A"/>
    <property type="match status" value="1"/>
</dbReference>
<dbReference type="HAMAP" id="MF_01393">
    <property type="entry name" value="ATP_synth_a_bact"/>
    <property type="match status" value="1"/>
</dbReference>
<dbReference type="InterPro" id="IPR045082">
    <property type="entry name" value="ATP_syn_F0_a_bact/chloroplast"/>
</dbReference>
<dbReference type="InterPro" id="IPR000568">
    <property type="entry name" value="ATP_synth_F0_asu"/>
</dbReference>
<dbReference type="InterPro" id="IPR023011">
    <property type="entry name" value="ATP_synth_F0_asu_AS"/>
</dbReference>
<dbReference type="InterPro" id="IPR035908">
    <property type="entry name" value="F0_ATP_A_sf"/>
</dbReference>
<dbReference type="NCBIfam" id="TIGR01131">
    <property type="entry name" value="ATP_synt_6_or_A"/>
    <property type="match status" value="1"/>
</dbReference>
<dbReference type="NCBIfam" id="NF004481">
    <property type="entry name" value="PRK05815.2-3"/>
    <property type="match status" value="1"/>
</dbReference>
<dbReference type="PANTHER" id="PTHR42823">
    <property type="entry name" value="ATP SYNTHASE SUBUNIT A, CHLOROPLASTIC"/>
    <property type="match status" value="1"/>
</dbReference>
<dbReference type="PANTHER" id="PTHR42823:SF3">
    <property type="entry name" value="ATP SYNTHASE SUBUNIT A, CHLOROPLASTIC"/>
    <property type="match status" value="1"/>
</dbReference>
<dbReference type="Pfam" id="PF00119">
    <property type="entry name" value="ATP-synt_A"/>
    <property type="match status" value="1"/>
</dbReference>
<dbReference type="PRINTS" id="PR00123">
    <property type="entry name" value="ATPASEA"/>
</dbReference>
<dbReference type="SUPFAM" id="SSF81336">
    <property type="entry name" value="F1F0 ATP synthase subunit A"/>
    <property type="match status" value="1"/>
</dbReference>
<dbReference type="PROSITE" id="PS00449">
    <property type="entry name" value="ATPASE_A"/>
    <property type="match status" value="1"/>
</dbReference>
<accession>Q30QW4</accession>
<sequence>MGELFTFFGLISHDKTFIYMTHMLLAAGIALMLVKMAMSNLKVVPTGTQNVMEAYISGVLKMGTDVMGQEAARRYLPLVATIGLFVGIANLIGVVPGFEAPTAFLEFAFTLALSVFIYYNYEGIRRQGVVKYFKHFLGPVWWLYWLMFPIEIVSHFSRLVSLSFRLFGNVKGDDMFLMVILMLAPWVLPMIPYALLTFMAFLQAFIFMMLTYVYLGSAIAVEEH</sequence>
<feature type="chain" id="PRO_0000362479" description="ATP synthase subunit a">
    <location>
        <begin position="1"/>
        <end position="224"/>
    </location>
</feature>
<feature type="transmembrane region" description="Helical" evidence="1">
    <location>
        <begin position="17"/>
        <end position="37"/>
    </location>
</feature>
<feature type="transmembrane region" description="Helical" evidence="1">
    <location>
        <begin position="78"/>
        <end position="98"/>
    </location>
</feature>
<feature type="transmembrane region" description="Helical" evidence="1">
    <location>
        <begin position="104"/>
        <end position="124"/>
    </location>
</feature>
<feature type="transmembrane region" description="Helical" evidence="1">
    <location>
        <begin position="136"/>
        <end position="156"/>
    </location>
</feature>
<feature type="transmembrane region" description="Helical" evidence="1">
    <location>
        <begin position="176"/>
        <end position="196"/>
    </location>
</feature>
<feature type="transmembrane region" description="Helical" evidence="1">
    <location>
        <begin position="201"/>
        <end position="221"/>
    </location>
</feature>
<name>ATP6_SULDN</name>
<keyword id="KW-0066">ATP synthesis</keyword>
<keyword id="KW-0997">Cell inner membrane</keyword>
<keyword id="KW-1003">Cell membrane</keyword>
<keyword id="KW-0138">CF(0)</keyword>
<keyword id="KW-0375">Hydrogen ion transport</keyword>
<keyword id="KW-0406">Ion transport</keyword>
<keyword id="KW-0472">Membrane</keyword>
<keyword id="KW-1185">Reference proteome</keyword>
<keyword id="KW-0812">Transmembrane</keyword>
<keyword id="KW-1133">Transmembrane helix</keyword>
<keyword id="KW-0813">Transport</keyword>
<protein>
    <recommendedName>
        <fullName evidence="1">ATP synthase subunit a</fullName>
    </recommendedName>
    <alternativeName>
        <fullName evidence="1">ATP synthase F0 sector subunit a</fullName>
    </alternativeName>
    <alternativeName>
        <fullName evidence="1">F-ATPase subunit 6</fullName>
    </alternativeName>
</protein>
<gene>
    <name evidence="1" type="primary">atpB</name>
    <name type="ordered locus">Suden_1339</name>
</gene>